<evidence type="ECO:0000269" key="1">
    <source>
    </source>
</evidence>
<evidence type="ECO:0000305" key="2"/>
<keyword id="KW-0903">Direct protein sequencing</keyword>
<keyword id="KW-0535">Nitrogen fixation</keyword>
<feature type="initiator methionine" description="Removed" evidence="1">
    <location>
        <position position="1"/>
    </location>
</feature>
<feature type="chain" id="PRO_0000219528" description="Nitrogenase-stabilizing/protective protein NifW">
    <location>
        <begin position="2"/>
        <end position="115"/>
    </location>
</feature>
<sequence length="115" mass="13418">MTVQPFSPDSDLTLDEAMDELVSAEDFLEFFGVPFDQDVVHVNRLHIMQRYHDYLSKAGDLDEHDDQARYAVFQKLLARAYLDFVESDALTEKVFKVFRMHEPQKTFVSIDQLLS</sequence>
<reference key="1">
    <citation type="journal article" date="1989" name="J. Bacteriol.">
        <title>Physical and genetic map of the major nif gene cluster from Azotobacter vinelandii.</title>
        <authorList>
            <person name="Jacobson M.R."/>
            <person name="Brigle K.E."/>
            <person name="Bennett L.T."/>
            <person name="Setterquist R.A."/>
            <person name="Wilson M.S."/>
            <person name="Cash V.L."/>
            <person name="Beynon J."/>
            <person name="Newton W.E."/>
            <person name="Dean D.R."/>
        </authorList>
    </citation>
    <scope>NUCLEOTIDE SEQUENCE [GENOMIC DNA]</scope>
    <source>
        <strain>ATCC 13705 / OP1 / DSM 366 / NCIMB 11614 / LMG 3878 / UW</strain>
    </source>
</reference>
<reference key="2">
    <citation type="journal article" date="1996" name="J. Biol. Chem.">
        <title>Evidence for the direct interaction of the nifW gene product with the MoFe protein.</title>
        <authorList>
            <person name="Kim S."/>
            <person name="Burgess B.K."/>
        </authorList>
    </citation>
    <scope>PROTEIN SEQUENCE OF 2-6</scope>
    <scope>CHARACTERIZATION</scope>
</reference>
<proteinExistence type="evidence at protein level"/>
<organism>
    <name type="scientific">Azotobacter vinelandii</name>
    <dbReference type="NCBI Taxonomy" id="354"/>
    <lineage>
        <taxon>Bacteria</taxon>
        <taxon>Pseudomonadati</taxon>
        <taxon>Pseudomonadota</taxon>
        <taxon>Gammaproteobacteria</taxon>
        <taxon>Pseudomonadales</taxon>
        <taxon>Pseudomonadaceae</taxon>
        <taxon>Azotobacter</taxon>
    </lineage>
</organism>
<comment type="function">
    <text>May protect the nitrogenase Fe-Mo protein from oxidative damage.</text>
</comment>
<comment type="subunit">
    <text>Homotrimer; associates with NifD.</text>
</comment>
<comment type="similarity">
    <text evidence="2">Belongs to the NifW family.</text>
</comment>
<protein>
    <recommendedName>
        <fullName>Nitrogenase-stabilizing/protective protein NifW</fullName>
    </recommendedName>
</protein>
<gene>
    <name type="primary">nifW</name>
</gene>
<name>NIFW_AZOVI</name>
<dbReference type="EMBL" id="M20568">
    <property type="protein sequence ID" value="AAA64730.1"/>
    <property type="molecule type" value="Genomic_DNA"/>
</dbReference>
<dbReference type="PIR" id="D32055">
    <property type="entry name" value="D32055"/>
</dbReference>
<dbReference type="RefSeq" id="WP_012698858.1">
    <property type="nucleotide sequence ID" value="NZ_FPKM01000020.1"/>
</dbReference>
<dbReference type="SMR" id="P14888"/>
<dbReference type="GeneID" id="88183631"/>
<dbReference type="OMA" id="MKRMGQY"/>
<dbReference type="GO" id="GO:0009399">
    <property type="term" value="P:nitrogen fixation"/>
    <property type="evidence" value="ECO:0007669"/>
    <property type="project" value="UniProtKB-UniRule"/>
</dbReference>
<dbReference type="HAMAP" id="MF_00529">
    <property type="entry name" value="NifW"/>
    <property type="match status" value="1"/>
</dbReference>
<dbReference type="InterPro" id="IPR004893">
    <property type="entry name" value="NifW"/>
</dbReference>
<dbReference type="Pfam" id="PF03206">
    <property type="entry name" value="NifW"/>
    <property type="match status" value="1"/>
</dbReference>
<dbReference type="PIRSF" id="PIRSF005790">
    <property type="entry name" value="NifW"/>
    <property type="match status" value="1"/>
</dbReference>
<accession>P14888</accession>